<dbReference type="EC" id="4.6.1.2"/>
<dbReference type="EMBL" id="AF038499">
    <property type="protein sequence ID" value="AAD09440.2"/>
    <property type="molecule type" value="mRNA"/>
</dbReference>
<dbReference type="EMBL" id="AF218383">
    <property type="protein sequence ID" value="AAF66105.1"/>
    <property type="molecule type" value="Genomic_DNA"/>
</dbReference>
<dbReference type="SMR" id="O75343"/>
<dbReference type="FunCoup" id="O75343">
    <property type="interactions" value="251"/>
</dbReference>
<dbReference type="IntAct" id="O75343">
    <property type="interactions" value="3"/>
</dbReference>
<dbReference type="ChEMBL" id="CHEMBL2111348"/>
<dbReference type="DrugBank" id="DB09401">
    <property type="generic name" value="Isosorbide"/>
</dbReference>
<dbReference type="DrugCentral" id="O75343"/>
<dbReference type="iPTMnet" id="O75343"/>
<dbReference type="PhosphoSitePlus" id="O75343"/>
<dbReference type="BioMuta" id="HGNC:4686"/>
<dbReference type="jPOST" id="O75343"/>
<dbReference type="MassIVE" id="O75343"/>
<dbReference type="PeptideAtlas" id="O75343"/>
<dbReference type="ProteomicsDB" id="49911"/>
<dbReference type="AGR" id="HGNC:4686"/>
<dbReference type="GeneCards" id="GUCY1B2"/>
<dbReference type="HGNC" id="HGNC:4686">
    <property type="gene designation" value="GUCY1B2"/>
</dbReference>
<dbReference type="MIM" id="603695">
    <property type="type" value="gene"/>
</dbReference>
<dbReference type="neXtProt" id="NX_O75343"/>
<dbReference type="InParanoid" id="O75343"/>
<dbReference type="PAN-GO" id="O75343">
    <property type="GO annotations" value="4 GO annotations based on evolutionary models"/>
</dbReference>
<dbReference type="PhylomeDB" id="O75343"/>
<dbReference type="BRENDA" id="4.6.1.2">
    <property type="organism ID" value="2681"/>
</dbReference>
<dbReference type="PathwayCommons" id="O75343"/>
<dbReference type="Reactome" id="R-HSA-392154">
    <property type="pathway name" value="Nitric oxide stimulates guanylate cyclase"/>
</dbReference>
<dbReference type="Reactome" id="R-HSA-445355">
    <property type="pathway name" value="Smooth Muscle Contraction"/>
</dbReference>
<dbReference type="SignaLink" id="O75343"/>
<dbReference type="SIGNOR" id="O75343"/>
<dbReference type="ChiTaRS" id="GUCY1B2">
    <property type="organism name" value="human"/>
</dbReference>
<dbReference type="Pharos" id="O75343">
    <property type="development level" value="Tclin"/>
</dbReference>
<dbReference type="PRO" id="PR:O75343"/>
<dbReference type="Proteomes" id="UP000005640">
    <property type="component" value="Unplaced"/>
</dbReference>
<dbReference type="RNAct" id="O75343">
    <property type="molecule type" value="protein"/>
</dbReference>
<dbReference type="GO" id="GO:0005829">
    <property type="term" value="C:cytosol"/>
    <property type="evidence" value="ECO:0000304"/>
    <property type="project" value="Reactome"/>
</dbReference>
<dbReference type="GO" id="GO:0008074">
    <property type="term" value="C:guanylate cyclase complex, soluble"/>
    <property type="evidence" value="ECO:0000318"/>
    <property type="project" value="GO_Central"/>
</dbReference>
<dbReference type="GO" id="GO:0005525">
    <property type="term" value="F:GTP binding"/>
    <property type="evidence" value="ECO:0007669"/>
    <property type="project" value="UniProtKB-KW"/>
</dbReference>
<dbReference type="GO" id="GO:0004383">
    <property type="term" value="F:guanylate cyclase activity"/>
    <property type="evidence" value="ECO:0000318"/>
    <property type="project" value="GO_Central"/>
</dbReference>
<dbReference type="GO" id="GO:0020037">
    <property type="term" value="F:heme binding"/>
    <property type="evidence" value="ECO:0007669"/>
    <property type="project" value="InterPro"/>
</dbReference>
<dbReference type="GO" id="GO:0046872">
    <property type="term" value="F:metal ion binding"/>
    <property type="evidence" value="ECO:0007669"/>
    <property type="project" value="UniProtKB-KW"/>
</dbReference>
<dbReference type="GO" id="GO:0019934">
    <property type="term" value="P:cGMP-mediated signaling"/>
    <property type="evidence" value="ECO:0000318"/>
    <property type="project" value="GO_Central"/>
</dbReference>
<dbReference type="GO" id="GO:0070482">
    <property type="term" value="P:response to oxygen levels"/>
    <property type="evidence" value="ECO:0000318"/>
    <property type="project" value="GO_Central"/>
</dbReference>
<dbReference type="CDD" id="cd07302">
    <property type="entry name" value="CHD"/>
    <property type="match status" value="1"/>
</dbReference>
<dbReference type="FunFam" id="3.30.450.260:FF:000002">
    <property type="entry name" value="guanylate cyclase soluble subunit alpha-2"/>
    <property type="match status" value="1"/>
</dbReference>
<dbReference type="FunFam" id="3.30.70.1230:FF:000007">
    <property type="entry name" value="Guanylate cyclase soluble subunit alpha-3"/>
    <property type="match status" value="1"/>
</dbReference>
<dbReference type="Gene3D" id="6.10.250.780">
    <property type="match status" value="1"/>
</dbReference>
<dbReference type="Gene3D" id="3.90.1520.10">
    <property type="entry name" value="H-NOX domain"/>
    <property type="match status" value="1"/>
</dbReference>
<dbReference type="Gene3D" id="3.30.450.260">
    <property type="entry name" value="Haem NO binding associated domain"/>
    <property type="match status" value="1"/>
</dbReference>
<dbReference type="Gene3D" id="3.30.70.1230">
    <property type="entry name" value="Nucleotide cyclase"/>
    <property type="match status" value="1"/>
</dbReference>
<dbReference type="InterPro" id="IPR001054">
    <property type="entry name" value="A/G_cyclase"/>
</dbReference>
<dbReference type="InterPro" id="IPR018297">
    <property type="entry name" value="A/G_cyclase_CS"/>
</dbReference>
<dbReference type="InterPro" id="IPR038158">
    <property type="entry name" value="H-NOX_domain_sf"/>
</dbReference>
<dbReference type="InterPro" id="IPR011644">
    <property type="entry name" value="Heme_NO-bd"/>
</dbReference>
<dbReference type="InterPro" id="IPR011645">
    <property type="entry name" value="HNOB_dom_associated"/>
</dbReference>
<dbReference type="InterPro" id="IPR042463">
    <property type="entry name" value="HNOB_dom_associated_sf"/>
</dbReference>
<dbReference type="InterPro" id="IPR024096">
    <property type="entry name" value="NO_sig/Golgi_transp_ligand-bd"/>
</dbReference>
<dbReference type="InterPro" id="IPR029787">
    <property type="entry name" value="Nucleotide_cyclase"/>
</dbReference>
<dbReference type="PANTHER" id="PTHR45655">
    <property type="entry name" value="GUANYLATE CYCLASE SOLUBLE SUBUNIT BETA-2"/>
    <property type="match status" value="1"/>
</dbReference>
<dbReference type="PANTHER" id="PTHR45655:SF17">
    <property type="entry name" value="GUANYLATE CYCLASE SOLUBLE SUBUNIT BETA-2"/>
    <property type="match status" value="1"/>
</dbReference>
<dbReference type="Pfam" id="PF00211">
    <property type="entry name" value="Guanylate_cyc"/>
    <property type="match status" value="1"/>
</dbReference>
<dbReference type="Pfam" id="PF07700">
    <property type="entry name" value="HNOB"/>
    <property type="match status" value="1"/>
</dbReference>
<dbReference type="Pfam" id="PF07701">
    <property type="entry name" value="HNOBA"/>
    <property type="match status" value="1"/>
</dbReference>
<dbReference type="SMART" id="SM00044">
    <property type="entry name" value="CYCc"/>
    <property type="match status" value="1"/>
</dbReference>
<dbReference type="SUPFAM" id="SSF111126">
    <property type="entry name" value="Ligand-binding domain in the NO signalling and Golgi transport"/>
    <property type="match status" value="1"/>
</dbReference>
<dbReference type="SUPFAM" id="SSF55073">
    <property type="entry name" value="Nucleotide cyclase"/>
    <property type="match status" value="1"/>
</dbReference>
<dbReference type="PROSITE" id="PS00452">
    <property type="entry name" value="GUANYLATE_CYCLASE_1"/>
    <property type="match status" value="1"/>
</dbReference>
<dbReference type="PROSITE" id="PS50125">
    <property type="entry name" value="GUANYLATE_CYCLASE_2"/>
    <property type="match status" value="1"/>
</dbReference>
<sequence>MSGYDRMLRTLGGNLMEFIENLDALHSYLALSYQEMNAPSFRVERGADGKMFLHYYSDRSGLCHIVPGIIEAVAKDFFDIDVIMDILDMNEEVERTGKKEHVVFLIVQKAHRKMRKTKPKRLQDSQGMERDQEALQAAFLKMKEKYLNVSACPVKKSHWDVVRSIVMFGKGHLMNTFEPIYPERLWIEEKTFCNAFPFHIVFDESLQVKQARVNIQKYVPGLQTQNIQLDEYFSIIHPQVTFNIFSIRRFINSQFVLKTRREMMPVAWQSRTTLKLQGQMIWMESMWCMVYLCSPKLRSLQELEELNMHLSDIAPNDTTRDLILLNQQRLAEIELSNQLERKKEELQVLSKHLAIEKKKTETLLYAMLPKHVANQLREGKKVAAGEFKSCTILFSDVVTFTNICTACEPIQIVNVLNSMYSKFDRLTSVHAVYKVETIGDAYMVVGGVPVPIGNHAQRVANFALGMRISAKEVTNPVTGEPIQLRVGIHTGPVLADVVGDKMPRYCLFGDTVNTASRMESHGLPNKVHLSPTAYRALKNQGFKIIERGEIEVKGKGRMTTYFLIQNLNATEDEIMGRSKTPVDHKGSTQKASLPTTKLQGSVQPSCPEHSSLASWLL</sequence>
<comment type="catalytic activity">
    <reaction>
        <text>GTP = 3',5'-cyclic GMP + diphosphate</text>
        <dbReference type="Rhea" id="RHEA:13665"/>
        <dbReference type="ChEBI" id="CHEBI:33019"/>
        <dbReference type="ChEBI" id="CHEBI:37565"/>
        <dbReference type="ChEBI" id="CHEBI:57746"/>
        <dbReference type="EC" id="4.6.1.2"/>
    </reaction>
</comment>
<comment type="cofactor">
    <cofactor evidence="1">
        <name>heme</name>
        <dbReference type="ChEBI" id="CHEBI:30413"/>
    </cofactor>
    <text evidence="1">Binds 1 or 2 heme groups per heterodimer.</text>
</comment>
<comment type="activity regulation">
    <text>Activated by nitric oxide in the presence of magnesium or manganese ions.</text>
</comment>
<comment type="subunit">
    <text>Heterodimer of an alpha and a beta chain.</text>
</comment>
<comment type="subcellular location">
    <subcellularLocation>
        <location>Cytoplasm</location>
    </subcellularLocation>
</comment>
<comment type="tissue specificity">
    <text evidence="4">Expressed in gastric signet ring cell carcinoma, but not in the normal stomach.</text>
</comment>
<comment type="miscellaneous">
    <text>There are two types of guanylate cyclases: soluble forms and membrane-associated receptor forms.</text>
</comment>
<comment type="similarity">
    <text evidence="2">Belongs to the adenylyl cyclase class-4/guanylyl cyclase family.</text>
</comment>
<comment type="caution">
    <text evidence="5">Could be the product of a pseudogene.</text>
</comment>
<name>GCYB2_HUMAN</name>
<organism>
    <name type="scientific">Homo sapiens</name>
    <name type="common">Human</name>
    <dbReference type="NCBI Taxonomy" id="9606"/>
    <lineage>
        <taxon>Eukaryota</taxon>
        <taxon>Metazoa</taxon>
        <taxon>Chordata</taxon>
        <taxon>Craniata</taxon>
        <taxon>Vertebrata</taxon>
        <taxon>Euteleostomi</taxon>
        <taxon>Mammalia</taxon>
        <taxon>Eutheria</taxon>
        <taxon>Euarchontoglires</taxon>
        <taxon>Primates</taxon>
        <taxon>Haplorrhini</taxon>
        <taxon>Catarrhini</taxon>
        <taxon>Hominidae</taxon>
        <taxon>Homo</taxon>
    </lineage>
</organism>
<accession>O75343</accession>
<accession>Q9NZ64</accession>
<protein>
    <recommendedName>
        <fullName>Guanylate cyclase soluble subunit beta-2</fullName>
        <shortName>GCS-beta-2</shortName>
        <ecNumber>4.6.1.2</ecNumber>
    </recommendedName>
</protein>
<keyword id="KW-0141">cGMP biosynthesis</keyword>
<keyword id="KW-0963">Cytoplasm</keyword>
<keyword id="KW-0342">GTP-binding</keyword>
<keyword id="KW-0349">Heme</keyword>
<keyword id="KW-0408">Iron</keyword>
<keyword id="KW-0456">Lyase</keyword>
<keyword id="KW-0479">Metal-binding</keyword>
<keyword id="KW-0547">Nucleotide-binding</keyword>
<keyword id="KW-1185">Reference proteome</keyword>
<proteinExistence type="uncertain"/>
<gene>
    <name type="primary">GUCY1B2</name>
</gene>
<reference key="1">
    <citation type="journal article" date="2000" name="Biochem. Biophys. Res. Commun.">
        <title>The beta(2) subunit of soluble guanylyl cyclase contains a human-specific frameshift and is expressed in gastric carcinoma.</title>
        <authorList>
            <person name="Behrends S."/>
            <person name="Vehse K."/>
        </authorList>
    </citation>
    <scope>NUCLEOTIDE SEQUENCE [GENOMIC DNA]</scope>
    <scope>SEQUENCE REVISION TO 175</scope>
    <scope>TISSUE SPECIFICITY</scope>
    <source>
        <tissue>Kidney</tissue>
    </source>
</reference>
<reference key="2">
    <citation type="journal article" date="1999" name="Genomics">
        <title>Assignment of GUCY1B2, the gene coding for the beta2 subunit of human guanylyl cyclase to chromosomal band 13q14.3 between markers D13S168 and D13S155.</title>
        <authorList>
            <person name="Behrends S."/>
            <person name="Kazmierczak B."/>
            <person name="Steenpa A."/>
            <person name="Knauf B."/>
            <person name="Bullerdiek J."/>
            <person name="Scholz H."/>
            <person name="Eiberg H."/>
        </authorList>
    </citation>
    <scope>NUCLEOTIDE SEQUENCE [MRNA] OF 95-257</scope>
    <source>
        <tissue>Heart</tissue>
    </source>
</reference>
<evidence type="ECO:0000250" key="1"/>
<evidence type="ECO:0000255" key="2">
    <source>
        <dbReference type="PROSITE-ProRule" id="PRU00099"/>
    </source>
</evidence>
<evidence type="ECO:0000256" key="3">
    <source>
        <dbReference type="SAM" id="MobiDB-lite"/>
    </source>
</evidence>
<evidence type="ECO:0000269" key="4">
    <source>
    </source>
</evidence>
<evidence type="ECO:0000305" key="5"/>
<feature type="chain" id="PRO_0000074119" description="Guanylate cyclase soluble subunit beta-2">
    <location>
        <begin position="1"/>
        <end position="617"/>
    </location>
</feature>
<feature type="domain" description="Guanylate cyclase" evidence="2">
    <location>
        <begin position="391"/>
        <end position="519"/>
    </location>
</feature>
<feature type="region of interest" description="Disordered" evidence="3">
    <location>
        <begin position="577"/>
        <end position="605"/>
    </location>
</feature>
<feature type="compositionally biased region" description="Basic and acidic residues" evidence="3">
    <location>
        <begin position="577"/>
        <end position="586"/>
    </location>
</feature>
<feature type="compositionally biased region" description="Polar residues" evidence="3">
    <location>
        <begin position="588"/>
        <end position="604"/>
    </location>
</feature>
<feature type="binding site" description="proximal binding residue" evidence="1">
    <location>
        <position position="26"/>
    </location>
    <ligand>
        <name>heme</name>
        <dbReference type="ChEBI" id="CHEBI:30413"/>
    </ligand>
    <ligandPart>
        <name>Fe</name>
        <dbReference type="ChEBI" id="CHEBI:18248"/>
    </ligandPart>
</feature>
<feature type="sequence variant" id="VAR_024469" description="In dbSNP:rs9568497.">
    <original>Y</original>
    <variation>C</variation>
    <location>
        <position position="55"/>
    </location>
</feature>
<feature type="sequence variant" id="VAR_024470" description="In dbSNP:rs11841997.">
    <original>M</original>
    <variation>I</variation>
    <location>
        <position position="128"/>
    </location>
</feature>
<feature type="sequence variant" id="VAR_022131" description="In dbSNP:rs1328361.">
    <original>N</original>
    <variation>H</variation>
    <location>
        <position position="316"/>
    </location>
</feature>